<geneLocation type="plasmid">
    <name>sym pNGR234a</name>
</geneLocation>
<accession>P55431</accession>
<comment type="function">
    <text>Thought to be an acetyltransferase that modifies the fucose of the nod factor.</text>
</comment>
<comment type="subcellular location">
    <subcellularLocation>
        <location evidence="2">Cell membrane</location>
        <topology evidence="2">Multi-pass membrane protein</topology>
    </subcellularLocation>
</comment>
<comment type="similarity">
    <text evidence="2">Belongs to the acyltransferase 3 family.</text>
</comment>
<feature type="chain" id="PRO_0000208083" description="Nodulation protein NolL">
    <location>
        <begin position="1"/>
        <end position="366"/>
    </location>
</feature>
<feature type="transmembrane region" description="Helical" evidence="1">
    <location>
        <begin position="27"/>
        <end position="47"/>
    </location>
</feature>
<feature type="transmembrane region" description="Helical" evidence="1">
    <location>
        <begin position="62"/>
        <end position="82"/>
    </location>
</feature>
<feature type="transmembrane region" description="Helical" evidence="1">
    <location>
        <begin position="98"/>
        <end position="118"/>
    </location>
</feature>
<feature type="transmembrane region" description="Helical" evidence="1">
    <location>
        <begin position="140"/>
        <end position="160"/>
    </location>
</feature>
<feature type="transmembrane region" description="Helical" evidence="1">
    <location>
        <begin position="164"/>
        <end position="184"/>
    </location>
</feature>
<feature type="transmembrane region" description="Helical" evidence="1">
    <location>
        <begin position="212"/>
        <end position="232"/>
    </location>
</feature>
<feature type="transmembrane region" description="Helical" evidence="1">
    <location>
        <begin position="253"/>
        <end position="273"/>
    </location>
</feature>
<feature type="transmembrane region" description="Helical" evidence="1">
    <location>
        <begin position="286"/>
        <end position="306"/>
    </location>
</feature>
<feature type="transmembrane region" description="Helical" evidence="1">
    <location>
        <begin position="324"/>
        <end position="344"/>
    </location>
</feature>
<keyword id="KW-0012">Acyltransferase</keyword>
<keyword id="KW-1003">Cell membrane</keyword>
<keyword id="KW-0472">Membrane</keyword>
<keyword id="KW-0536">Nodulation</keyword>
<keyword id="KW-0614">Plasmid</keyword>
<keyword id="KW-1185">Reference proteome</keyword>
<keyword id="KW-0808">Transferase</keyword>
<keyword id="KW-0812">Transmembrane</keyword>
<keyword id="KW-1133">Transmembrane helix</keyword>
<organism>
    <name type="scientific">Sinorhizobium fredii (strain NBRC 101917 / NGR234)</name>
    <dbReference type="NCBI Taxonomy" id="394"/>
    <lineage>
        <taxon>Bacteria</taxon>
        <taxon>Pseudomonadati</taxon>
        <taxon>Pseudomonadota</taxon>
        <taxon>Alphaproteobacteria</taxon>
        <taxon>Hyphomicrobiales</taxon>
        <taxon>Rhizobiaceae</taxon>
        <taxon>Sinorhizobium/Ensifer group</taxon>
        <taxon>Sinorhizobium</taxon>
    </lineage>
</organism>
<protein>
    <recommendedName>
        <fullName>Nodulation protein NolL</fullName>
        <ecNumber>2.3.1.-</ecNumber>
    </recommendedName>
</protein>
<name>NOLL_SINFN</name>
<dbReference type="EC" id="2.3.1.-"/>
<dbReference type="EMBL" id="U00090">
    <property type="protein sequence ID" value="AAB91652.1"/>
    <property type="molecule type" value="Genomic_DNA"/>
</dbReference>
<dbReference type="RefSeq" id="NP_443840.1">
    <property type="nucleotide sequence ID" value="NC_000914.2"/>
</dbReference>
<dbReference type="RefSeq" id="WP_010875398.1">
    <property type="nucleotide sequence ID" value="NC_000914.2"/>
</dbReference>
<dbReference type="KEGG" id="rhi:NGR_a03860"/>
<dbReference type="eggNOG" id="COG3594">
    <property type="taxonomic scope" value="Bacteria"/>
</dbReference>
<dbReference type="HOGENOM" id="CLU_741613_0_0_5"/>
<dbReference type="OrthoDB" id="9814956at2"/>
<dbReference type="Proteomes" id="UP000001054">
    <property type="component" value="Plasmid pNGR234a"/>
</dbReference>
<dbReference type="GO" id="GO:0005886">
    <property type="term" value="C:plasma membrane"/>
    <property type="evidence" value="ECO:0007669"/>
    <property type="project" value="UniProtKB-SubCell"/>
</dbReference>
<dbReference type="GO" id="GO:0016747">
    <property type="term" value="F:acyltransferase activity, transferring groups other than amino-acyl groups"/>
    <property type="evidence" value="ECO:0007669"/>
    <property type="project" value="InterPro"/>
</dbReference>
<dbReference type="InterPro" id="IPR002656">
    <property type="entry name" value="Acyl_transf_3_dom"/>
</dbReference>
<dbReference type="InterPro" id="IPR052734">
    <property type="entry name" value="Nod_factor_acetyltransferase"/>
</dbReference>
<dbReference type="InterPro" id="IPR053490">
    <property type="entry name" value="Nod_factor_Fuc_AcT"/>
</dbReference>
<dbReference type="NCBIfam" id="NF042426">
    <property type="entry name" value="fucose_Ac_NolL"/>
    <property type="match status" value="1"/>
</dbReference>
<dbReference type="PANTHER" id="PTHR37312">
    <property type="entry name" value="MEMBRANE-BOUND ACYLTRANSFERASE YKRP-RELATED"/>
    <property type="match status" value="1"/>
</dbReference>
<dbReference type="PANTHER" id="PTHR37312:SF1">
    <property type="entry name" value="MEMBRANE-BOUND ACYLTRANSFERASE YKRP-RELATED"/>
    <property type="match status" value="1"/>
</dbReference>
<dbReference type="Pfam" id="PF01757">
    <property type="entry name" value="Acyl_transf_3"/>
    <property type="match status" value="1"/>
</dbReference>
<reference key="1">
    <citation type="journal article" date="1997" name="Nature">
        <title>Molecular basis of symbiosis between Rhizobium and legumes.</title>
        <authorList>
            <person name="Freiberg C.A."/>
            <person name="Fellay R."/>
            <person name="Bairoch A."/>
            <person name="Broughton W.J."/>
            <person name="Rosenthal A."/>
            <person name="Perret X."/>
        </authorList>
    </citation>
    <scope>NUCLEOTIDE SEQUENCE [LARGE SCALE GENOMIC DNA]</scope>
    <source>
        <strain>NBRC 101917 / NGR234</strain>
    </source>
</reference>
<reference key="2">
    <citation type="journal article" date="2009" name="Appl. Environ. Microbiol.">
        <title>Rhizobium sp. strain NGR234 possesses a remarkable number of secretion systems.</title>
        <authorList>
            <person name="Schmeisser C."/>
            <person name="Liesegang H."/>
            <person name="Krysciak D."/>
            <person name="Bakkou N."/>
            <person name="Le Quere A."/>
            <person name="Wollherr A."/>
            <person name="Heinemeyer I."/>
            <person name="Morgenstern B."/>
            <person name="Pommerening-Roeser A."/>
            <person name="Flores M."/>
            <person name="Palacios R."/>
            <person name="Brenner S."/>
            <person name="Gottschalk G."/>
            <person name="Schmitz R.A."/>
            <person name="Broughton W.J."/>
            <person name="Perret X."/>
            <person name="Strittmatter A.W."/>
            <person name="Streit W.R."/>
        </authorList>
    </citation>
    <scope>NUCLEOTIDE SEQUENCE [LARGE SCALE GENOMIC DNA]</scope>
    <source>
        <strain>NBRC 101917 / NGR234</strain>
    </source>
</reference>
<gene>
    <name type="primary">nolL</name>
    <name type="ordered locus">NGR_a03860</name>
    <name type="ORF">y4eH</name>
</gene>
<sequence length="366" mass="40583">MGYAAVPPVERGSCSAGANNRDITFDFVKGILIILVVLGHLLQLVIYRNTDNFWLSPYFKAIYMFHMPLFMAISGYLASGTILRTSFCRAVGDRAVQLLIPMLFWCALIETAKLAAFFHFSGVTAGLLDFSRELVGTYWFLWAVLASFLLTKLFAAFNLLSKWILCASAIVIALMPITLSIVPLLRYTYPFFCLGFLFAQTIEEQANTMLRHKSLLMFSCWAVACLCFLDWGRDTYAYNNLVLVHDAQSAKQVLLMFTGSAAAAAVAAQSLFHCWRVLCSTRLARLVAVELGQSTLLLYLVQGAVFRLTDLIQFGELWDGKTRIVVASAIGAAIFGAATAVLWIVNDLGYVSRIIVGAPRRLKRSS</sequence>
<evidence type="ECO:0000255" key="1"/>
<evidence type="ECO:0000305" key="2"/>
<proteinExistence type="inferred from homology"/>